<comment type="function">
    <text evidence="1">Binds the 23S rRNA.</text>
</comment>
<comment type="subunit">
    <text evidence="1">Part of the 50S ribosomal subunit.</text>
</comment>
<comment type="subcellular location">
    <subcellularLocation>
        <location>Plastid</location>
        <location>Chloroplast</location>
    </subcellularLocation>
</comment>
<comment type="similarity">
    <text evidence="1">Belongs to the bacterial ribosomal protein bL31 family. Type A subfamily.</text>
</comment>
<proteinExistence type="inferred from homology"/>
<sequence>MPKQNLHPKWYAEAKVYCDGQLIMTIGSTKSELNVDIWSGNHPFYTGSQKMLDTEGRVERFMRKYGLKENNS</sequence>
<dbReference type="EMBL" id="AF041468">
    <property type="protein sequence ID" value="AAC35727.1"/>
    <property type="molecule type" value="Genomic_DNA"/>
</dbReference>
<dbReference type="RefSeq" id="NP_050793.1">
    <property type="nucleotide sequence ID" value="NC_000926.1"/>
</dbReference>
<dbReference type="SMR" id="O46917"/>
<dbReference type="GeneID" id="857101"/>
<dbReference type="HOGENOM" id="CLU_114306_1_2_1"/>
<dbReference type="OMA" id="IHVDVWS"/>
<dbReference type="GO" id="GO:0009507">
    <property type="term" value="C:chloroplast"/>
    <property type="evidence" value="ECO:0007669"/>
    <property type="project" value="UniProtKB-SubCell"/>
</dbReference>
<dbReference type="GO" id="GO:1990904">
    <property type="term" value="C:ribonucleoprotein complex"/>
    <property type="evidence" value="ECO:0007669"/>
    <property type="project" value="UniProtKB-KW"/>
</dbReference>
<dbReference type="GO" id="GO:0005840">
    <property type="term" value="C:ribosome"/>
    <property type="evidence" value="ECO:0007669"/>
    <property type="project" value="UniProtKB-KW"/>
</dbReference>
<dbReference type="GO" id="GO:0019843">
    <property type="term" value="F:rRNA binding"/>
    <property type="evidence" value="ECO:0007669"/>
    <property type="project" value="UniProtKB-KW"/>
</dbReference>
<dbReference type="GO" id="GO:0003735">
    <property type="term" value="F:structural constituent of ribosome"/>
    <property type="evidence" value="ECO:0007669"/>
    <property type="project" value="InterPro"/>
</dbReference>
<dbReference type="GO" id="GO:0006412">
    <property type="term" value="P:translation"/>
    <property type="evidence" value="ECO:0007669"/>
    <property type="project" value="UniProtKB-UniRule"/>
</dbReference>
<dbReference type="Gene3D" id="4.10.830.30">
    <property type="entry name" value="Ribosomal protein L31"/>
    <property type="match status" value="1"/>
</dbReference>
<dbReference type="HAMAP" id="MF_00501">
    <property type="entry name" value="Ribosomal_bL31_1"/>
    <property type="match status" value="1"/>
</dbReference>
<dbReference type="InterPro" id="IPR034704">
    <property type="entry name" value="Ribosomal_bL28/bL31-like_sf"/>
</dbReference>
<dbReference type="InterPro" id="IPR002150">
    <property type="entry name" value="Ribosomal_bL31"/>
</dbReference>
<dbReference type="InterPro" id="IPR027491">
    <property type="entry name" value="Ribosomal_bL31_A"/>
</dbReference>
<dbReference type="InterPro" id="IPR042105">
    <property type="entry name" value="Ribosomal_bL31_sf"/>
</dbReference>
<dbReference type="NCBIfam" id="TIGR00105">
    <property type="entry name" value="L31"/>
    <property type="match status" value="1"/>
</dbReference>
<dbReference type="NCBIfam" id="NF000612">
    <property type="entry name" value="PRK00019.1"/>
    <property type="match status" value="1"/>
</dbReference>
<dbReference type="NCBIfam" id="NF001809">
    <property type="entry name" value="PRK00528.1"/>
    <property type="match status" value="1"/>
</dbReference>
<dbReference type="PANTHER" id="PTHR33280">
    <property type="entry name" value="50S RIBOSOMAL PROTEIN L31, CHLOROPLASTIC"/>
    <property type="match status" value="1"/>
</dbReference>
<dbReference type="PANTHER" id="PTHR33280:SF1">
    <property type="entry name" value="LARGE RIBOSOMAL SUBUNIT PROTEIN BL31C"/>
    <property type="match status" value="1"/>
</dbReference>
<dbReference type="Pfam" id="PF01197">
    <property type="entry name" value="Ribosomal_L31"/>
    <property type="match status" value="1"/>
</dbReference>
<dbReference type="PRINTS" id="PR01249">
    <property type="entry name" value="RIBOSOMALL31"/>
</dbReference>
<dbReference type="SUPFAM" id="SSF143800">
    <property type="entry name" value="L28p-like"/>
    <property type="match status" value="1"/>
</dbReference>
<dbReference type="PROSITE" id="PS01143">
    <property type="entry name" value="RIBOSOMAL_L31"/>
    <property type="match status" value="1"/>
</dbReference>
<accession>O46917</accession>
<organism>
    <name type="scientific">Guillardia theta</name>
    <name type="common">Cryptophyte</name>
    <name type="synonym">Cryptomonas phi</name>
    <dbReference type="NCBI Taxonomy" id="55529"/>
    <lineage>
        <taxon>Eukaryota</taxon>
        <taxon>Cryptophyceae</taxon>
        <taxon>Pyrenomonadales</taxon>
        <taxon>Geminigeraceae</taxon>
        <taxon>Guillardia</taxon>
    </lineage>
</organism>
<geneLocation type="chloroplast"/>
<evidence type="ECO:0000255" key="1">
    <source>
        <dbReference type="HAMAP-Rule" id="MF_00501"/>
    </source>
</evidence>
<evidence type="ECO:0000305" key="2"/>
<protein>
    <recommendedName>
        <fullName evidence="1">Large ribosomal subunit protein bL31c</fullName>
    </recommendedName>
    <alternativeName>
        <fullName evidence="2">50S ribosomal protein L31, chloroplastic</fullName>
    </alternativeName>
</protein>
<reference key="1">
    <citation type="journal article" date="1997" name="Biochem. Mol. Biol. Int.">
        <title>The large ribosomal protein gene cluster of a cryptomonad plastid: gene organization, sequence and evolutionary implications.</title>
        <authorList>
            <person name="Wang S.L."/>
            <person name="Liu X.-Q."/>
            <person name="Douglas S.E."/>
        </authorList>
    </citation>
    <scope>NUCLEOTIDE SEQUENCE [GENOMIC DNA]</scope>
</reference>
<reference key="2">
    <citation type="journal article" date="1999" name="J. Mol. Evol.">
        <title>The plastid genome of the cryptophyte alga, Guillardia theta: complete sequence and conserved synteny groups confirm its common ancestry with red algae.</title>
        <authorList>
            <person name="Douglas S.E."/>
            <person name="Penny S.L."/>
        </authorList>
    </citation>
    <scope>NUCLEOTIDE SEQUENCE [LARGE SCALE GENOMIC DNA]</scope>
</reference>
<name>RK31_GUITH</name>
<gene>
    <name evidence="1" type="primary">rpl31</name>
</gene>
<keyword id="KW-0150">Chloroplast</keyword>
<keyword id="KW-0934">Plastid</keyword>
<keyword id="KW-0687">Ribonucleoprotein</keyword>
<keyword id="KW-0689">Ribosomal protein</keyword>
<keyword id="KW-0694">RNA-binding</keyword>
<keyword id="KW-0699">rRNA-binding</keyword>
<feature type="chain" id="PRO_0000173189" description="Large ribosomal subunit protein bL31c">
    <location>
        <begin position="1"/>
        <end position="72"/>
    </location>
</feature>